<sequence length="511" mass="57861">MMKMRWLGAAIMLTLYASSSWAFSIDDVAKQAQSLAGKGYEAPKSNLPSVFRDMKYADYQQIQFNSDKAYWNNLKTPFKLEFYHQGMYFDTLVKINEVTATTVKRIKYSPDYFNFGNVQHDKDTVKDLGFAGFKVLYPINSKDKNDEIVSMLGASYFRVIGAGQVYGLSARGLAIDTALPSGEEFPRFREFWIERPKPTDKRLTVYALLDSPRATGAYRFVIIPGRDTVVDVQSKVYLRDKVGKLGVAPLTSMFLFGPNQPSPTTNYRPELHDSNGLSIHAGNGEWIWRPLNNPKHLAVSSYAMENPQGFGLLQRGREFSRFEDLDDRYDLRPSAWITPKGDWGKGKVELVEIPTNDETNDNIVAYWTPDQLPEPGKEMNFKYTLTFSRDEDKLHAPDNAWVLQTRRSTGDVKQSNLIRQPDGTIAFVVDFVGADMKKLPPDTPVAAQTSIGDNGEIVDSNVRYNPVTKGWRLMLRVKVKDAKKTTEMRAALVNADQTLSETWSYQLPANE</sequence>
<organism>
    <name type="scientific">Salmonella paratyphi A (strain ATCC 9150 / SARB42)</name>
    <dbReference type="NCBI Taxonomy" id="295319"/>
    <lineage>
        <taxon>Bacteria</taxon>
        <taxon>Pseudomonadati</taxon>
        <taxon>Pseudomonadota</taxon>
        <taxon>Gammaproteobacteria</taxon>
        <taxon>Enterobacterales</taxon>
        <taxon>Enterobacteriaceae</taxon>
        <taxon>Salmonella</taxon>
    </lineage>
</organism>
<name>OPGG_SALPA</name>
<proteinExistence type="inferred from homology"/>
<keyword id="KW-0574">Periplasm</keyword>
<keyword id="KW-0732">Signal</keyword>
<protein>
    <recommendedName>
        <fullName evidence="1">Glucans biosynthesis protein G</fullName>
    </recommendedName>
</protein>
<feature type="signal peptide" evidence="1">
    <location>
        <begin position="1"/>
        <end position="22"/>
    </location>
</feature>
<feature type="chain" id="PRO_1000064565" description="Glucans biosynthesis protein G">
    <location>
        <begin position="23"/>
        <end position="511"/>
    </location>
</feature>
<reference key="1">
    <citation type="journal article" date="2004" name="Nat. Genet.">
        <title>Comparison of genome degradation in Paratyphi A and Typhi, human-restricted serovars of Salmonella enterica that cause typhoid.</title>
        <authorList>
            <person name="McClelland M."/>
            <person name="Sanderson K.E."/>
            <person name="Clifton S.W."/>
            <person name="Latreille P."/>
            <person name="Porwollik S."/>
            <person name="Sabo A."/>
            <person name="Meyer R."/>
            <person name="Bieri T."/>
            <person name="Ozersky P."/>
            <person name="McLellan M."/>
            <person name="Harkins C.R."/>
            <person name="Wang C."/>
            <person name="Nguyen C."/>
            <person name="Berghoff A."/>
            <person name="Elliott G."/>
            <person name="Kohlberg S."/>
            <person name="Strong C."/>
            <person name="Du F."/>
            <person name="Carter J."/>
            <person name="Kremizki C."/>
            <person name="Layman D."/>
            <person name="Leonard S."/>
            <person name="Sun H."/>
            <person name="Fulton L."/>
            <person name="Nash W."/>
            <person name="Miner T."/>
            <person name="Minx P."/>
            <person name="Delehaunty K."/>
            <person name="Fronick C."/>
            <person name="Magrini V."/>
            <person name="Nhan M."/>
            <person name="Warren W."/>
            <person name="Florea L."/>
            <person name="Spieth J."/>
            <person name="Wilson R.K."/>
        </authorList>
    </citation>
    <scope>NUCLEOTIDE SEQUENCE [LARGE SCALE GENOMIC DNA]</scope>
    <source>
        <strain>ATCC 9150 / SARB42</strain>
    </source>
</reference>
<evidence type="ECO:0000255" key="1">
    <source>
        <dbReference type="HAMAP-Rule" id="MF_01069"/>
    </source>
</evidence>
<gene>
    <name evidence="1" type="primary">mdoG</name>
    <name evidence="1" type="synonym">opgG</name>
    <name type="ordered locus">SPA1701</name>
</gene>
<dbReference type="EMBL" id="CP000026">
    <property type="protein sequence ID" value="AAV77625.1"/>
    <property type="molecule type" value="Genomic_DNA"/>
</dbReference>
<dbReference type="RefSeq" id="WP_011233079.1">
    <property type="nucleotide sequence ID" value="NC_006511.1"/>
</dbReference>
<dbReference type="SMR" id="Q5PGX6"/>
<dbReference type="KEGG" id="spt:SPA1701"/>
<dbReference type="HOGENOM" id="CLU_023403_2_0_6"/>
<dbReference type="UniPathway" id="UPA00637"/>
<dbReference type="Proteomes" id="UP000008185">
    <property type="component" value="Chromosome"/>
</dbReference>
<dbReference type="GO" id="GO:0030288">
    <property type="term" value="C:outer membrane-bounded periplasmic space"/>
    <property type="evidence" value="ECO:0007669"/>
    <property type="project" value="TreeGrafter"/>
</dbReference>
<dbReference type="GO" id="GO:0030246">
    <property type="term" value="F:carbohydrate binding"/>
    <property type="evidence" value="ECO:0007669"/>
    <property type="project" value="InterPro"/>
</dbReference>
<dbReference type="GO" id="GO:0003824">
    <property type="term" value="F:catalytic activity"/>
    <property type="evidence" value="ECO:0007669"/>
    <property type="project" value="InterPro"/>
</dbReference>
<dbReference type="GO" id="GO:0051274">
    <property type="term" value="P:beta-glucan biosynthetic process"/>
    <property type="evidence" value="ECO:0007669"/>
    <property type="project" value="TreeGrafter"/>
</dbReference>
<dbReference type="FunFam" id="2.60.40.10:FF:000294">
    <property type="entry name" value="Glucans biosynthesis protein G"/>
    <property type="match status" value="1"/>
</dbReference>
<dbReference type="FunFam" id="2.70.98.10:FF:000001">
    <property type="entry name" value="Glucans biosynthesis protein G"/>
    <property type="match status" value="1"/>
</dbReference>
<dbReference type="Gene3D" id="2.70.98.10">
    <property type="match status" value="1"/>
</dbReference>
<dbReference type="Gene3D" id="2.60.40.10">
    <property type="entry name" value="Immunoglobulins"/>
    <property type="match status" value="1"/>
</dbReference>
<dbReference type="HAMAP" id="MF_01069">
    <property type="entry name" value="MdoG_OpgG"/>
    <property type="match status" value="1"/>
</dbReference>
<dbReference type="InterPro" id="IPR011013">
    <property type="entry name" value="Gal_mutarotase_sf_dom"/>
</dbReference>
<dbReference type="InterPro" id="IPR014718">
    <property type="entry name" value="GH-type_carb-bd"/>
</dbReference>
<dbReference type="InterPro" id="IPR014438">
    <property type="entry name" value="Glucan_biosyn_MdoG/MdoD"/>
</dbReference>
<dbReference type="InterPro" id="IPR007444">
    <property type="entry name" value="Glucan_biosyn_MdoG_C"/>
</dbReference>
<dbReference type="InterPro" id="IPR013783">
    <property type="entry name" value="Ig-like_fold"/>
</dbReference>
<dbReference type="InterPro" id="IPR014756">
    <property type="entry name" value="Ig_E-set"/>
</dbReference>
<dbReference type="InterPro" id="IPR023704">
    <property type="entry name" value="MdoG_OpgG"/>
</dbReference>
<dbReference type="PANTHER" id="PTHR30504">
    <property type="entry name" value="GLUCANS BIOSYNTHESIS PROTEIN"/>
    <property type="match status" value="1"/>
</dbReference>
<dbReference type="PANTHER" id="PTHR30504:SF4">
    <property type="entry name" value="GLUCANS BIOSYNTHESIS PROTEIN G"/>
    <property type="match status" value="1"/>
</dbReference>
<dbReference type="Pfam" id="PF04349">
    <property type="entry name" value="MdoG"/>
    <property type="match status" value="1"/>
</dbReference>
<dbReference type="PIRSF" id="PIRSF006281">
    <property type="entry name" value="MdoG"/>
    <property type="match status" value="1"/>
</dbReference>
<dbReference type="SUPFAM" id="SSF81296">
    <property type="entry name" value="E set domains"/>
    <property type="match status" value="1"/>
</dbReference>
<dbReference type="SUPFAM" id="SSF74650">
    <property type="entry name" value="Galactose mutarotase-like"/>
    <property type="match status" value="1"/>
</dbReference>
<accession>Q5PGX6</accession>
<comment type="function">
    <text evidence="1">Involved in the biosynthesis of osmoregulated periplasmic glucans (OPGs).</text>
</comment>
<comment type="pathway">
    <text evidence="1">Glycan metabolism; osmoregulated periplasmic glucan (OPG) biosynthesis.</text>
</comment>
<comment type="subcellular location">
    <subcellularLocation>
        <location evidence="1">Periplasm</location>
    </subcellularLocation>
</comment>
<comment type="similarity">
    <text evidence="1">Belongs to the OpgD/OpgG family.</text>
</comment>